<reference key="1">
    <citation type="submission" date="2008-06" db="EMBL/GenBank/DDBJ databases">
        <title>Complete sequence of Stenotrophomonas maltophilia R551-3.</title>
        <authorList>
            <consortium name="US DOE Joint Genome Institute"/>
            <person name="Lucas S."/>
            <person name="Copeland A."/>
            <person name="Lapidus A."/>
            <person name="Glavina del Rio T."/>
            <person name="Dalin E."/>
            <person name="Tice H."/>
            <person name="Pitluck S."/>
            <person name="Chain P."/>
            <person name="Malfatti S."/>
            <person name="Shin M."/>
            <person name="Vergez L."/>
            <person name="Lang D."/>
            <person name="Schmutz J."/>
            <person name="Larimer F."/>
            <person name="Land M."/>
            <person name="Hauser L."/>
            <person name="Kyrpides N."/>
            <person name="Mikhailova N."/>
            <person name="Taghavi S."/>
            <person name="Monchy S."/>
            <person name="Newman L."/>
            <person name="Vangronsveld J."/>
            <person name="van der Lelie D."/>
            <person name="Richardson P."/>
        </authorList>
    </citation>
    <scope>NUCLEOTIDE SEQUENCE [LARGE SCALE GENOMIC DNA]</scope>
    <source>
        <strain>R551-3</strain>
    </source>
</reference>
<comment type="function">
    <text evidence="1">Promotes RNA polymerase assembly. Latches the N- and C-terminal regions of the beta' subunit thereby facilitating its interaction with the beta and alpha subunits.</text>
</comment>
<comment type="catalytic activity">
    <reaction evidence="1">
        <text>RNA(n) + a ribonucleoside 5'-triphosphate = RNA(n+1) + diphosphate</text>
        <dbReference type="Rhea" id="RHEA:21248"/>
        <dbReference type="Rhea" id="RHEA-COMP:14527"/>
        <dbReference type="Rhea" id="RHEA-COMP:17342"/>
        <dbReference type="ChEBI" id="CHEBI:33019"/>
        <dbReference type="ChEBI" id="CHEBI:61557"/>
        <dbReference type="ChEBI" id="CHEBI:140395"/>
        <dbReference type="EC" id="2.7.7.6"/>
    </reaction>
</comment>
<comment type="subunit">
    <text evidence="1">The RNAP catalytic core consists of 2 alpha, 1 beta, 1 beta' and 1 omega subunit. When a sigma factor is associated with the core the holoenzyme is formed, which can initiate transcription.</text>
</comment>
<comment type="similarity">
    <text evidence="1">Belongs to the RNA polymerase subunit omega family.</text>
</comment>
<dbReference type="EC" id="2.7.7.6" evidence="1"/>
<dbReference type="EMBL" id="CP001111">
    <property type="protein sequence ID" value="ACF52958.1"/>
    <property type="molecule type" value="Genomic_DNA"/>
</dbReference>
<dbReference type="RefSeq" id="WP_005410877.1">
    <property type="nucleotide sequence ID" value="NC_011071.1"/>
</dbReference>
<dbReference type="SMR" id="B4STZ5"/>
<dbReference type="STRING" id="391008.Smal_3259"/>
<dbReference type="GeneID" id="97262492"/>
<dbReference type="KEGG" id="smt:Smal_3259"/>
<dbReference type="eggNOG" id="COG1758">
    <property type="taxonomic scope" value="Bacteria"/>
</dbReference>
<dbReference type="HOGENOM" id="CLU_125406_5_3_6"/>
<dbReference type="OrthoDB" id="9796300at2"/>
<dbReference type="Proteomes" id="UP000001867">
    <property type="component" value="Chromosome"/>
</dbReference>
<dbReference type="GO" id="GO:0000428">
    <property type="term" value="C:DNA-directed RNA polymerase complex"/>
    <property type="evidence" value="ECO:0007669"/>
    <property type="project" value="UniProtKB-KW"/>
</dbReference>
<dbReference type="GO" id="GO:0003677">
    <property type="term" value="F:DNA binding"/>
    <property type="evidence" value="ECO:0007669"/>
    <property type="project" value="UniProtKB-UniRule"/>
</dbReference>
<dbReference type="GO" id="GO:0003899">
    <property type="term" value="F:DNA-directed RNA polymerase activity"/>
    <property type="evidence" value="ECO:0007669"/>
    <property type="project" value="UniProtKB-UniRule"/>
</dbReference>
<dbReference type="GO" id="GO:0006351">
    <property type="term" value="P:DNA-templated transcription"/>
    <property type="evidence" value="ECO:0007669"/>
    <property type="project" value="UniProtKB-UniRule"/>
</dbReference>
<dbReference type="Gene3D" id="3.90.940.10">
    <property type="match status" value="1"/>
</dbReference>
<dbReference type="HAMAP" id="MF_00366">
    <property type="entry name" value="RNApol_bact_RpoZ"/>
    <property type="match status" value="1"/>
</dbReference>
<dbReference type="InterPro" id="IPR003716">
    <property type="entry name" value="DNA-dir_RNA_pol_omega"/>
</dbReference>
<dbReference type="InterPro" id="IPR006110">
    <property type="entry name" value="Pol_omega/Rpo6/RPB6"/>
</dbReference>
<dbReference type="InterPro" id="IPR036161">
    <property type="entry name" value="RPB6/omega-like_sf"/>
</dbReference>
<dbReference type="NCBIfam" id="TIGR00690">
    <property type="entry name" value="rpoZ"/>
    <property type="match status" value="1"/>
</dbReference>
<dbReference type="PANTHER" id="PTHR34476">
    <property type="entry name" value="DNA-DIRECTED RNA POLYMERASE SUBUNIT OMEGA"/>
    <property type="match status" value="1"/>
</dbReference>
<dbReference type="PANTHER" id="PTHR34476:SF1">
    <property type="entry name" value="DNA-DIRECTED RNA POLYMERASE SUBUNIT OMEGA"/>
    <property type="match status" value="1"/>
</dbReference>
<dbReference type="Pfam" id="PF01192">
    <property type="entry name" value="RNA_pol_Rpb6"/>
    <property type="match status" value="1"/>
</dbReference>
<dbReference type="SMART" id="SM01409">
    <property type="entry name" value="RNA_pol_Rpb6"/>
    <property type="match status" value="1"/>
</dbReference>
<dbReference type="SUPFAM" id="SSF63562">
    <property type="entry name" value="RPB6/omega subunit-like"/>
    <property type="match status" value="1"/>
</dbReference>
<proteinExistence type="inferred from homology"/>
<organism>
    <name type="scientific">Stenotrophomonas maltophilia (strain R551-3)</name>
    <dbReference type="NCBI Taxonomy" id="391008"/>
    <lineage>
        <taxon>Bacteria</taxon>
        <taxon>Pseudomonadati</taxon>
        <taxon>Pseudomonadota</taxon>
        <taxon>Gammaproteobacteria</taxon>
        <taxon>Lysobacterales</taxon>
        <taxon>Lysobacteraceae</taxon>
        <taxon>Stenotrophomonas</taxon>
        <taxon>Stenotrophomonas maltophilia group</taxon>
    </lineage>
</organism>
<accession>B4STZ5</accession>
<protein>
    <recommendedName>
        <fullName evidence="1">DNA-directed RNA polymerase subunit omega</fullName>
        <shortName evidence="1">RNAP omega subunit</shortName>
        <ecNumber evidence="1">2.7.7.6</ecNumber>
    </recommendedName>
    <alternativeName>
        <fullName evidence="1">RNA polymerase omega subunit</fullName>
    </alternativeName>
    <alternativeName>
        <fullName evidence="1">Transcriptase subunit omega</fullName>
    </alternativeName>
</protein>
<name>RPOZ_STRM5</name>
<gene>
    <name evidence="1" type="primary">rpoZ</name>
    <name type="ordered locus">Smal_3259</name>
</gene>
<feature type="chain" id="PRO_1000121277" description="DNA-directed RNA polymerase subunit omega">
    <location>
        <begin position="1"/>
        <end position="99"/>
    </location>
</feature>
<evidence type="ECO:0000255" key="1">
    <source>
        <dbReference type="HAMAP-Rule" id="MF_00366"/>
    </source>
</evidence>
<sequence length="99" mass="11146">MARITVEDCLEVVNNRFELVMMASKRARQLANGVQATLDNSETEDKPTVLALREIAARKIDNALIDEVEKAERERAEREALEWAAAEVVADEDMSKNDD</sequence>
<keyword id="KW-0240">DNA-directed RNA polymerase</keyword>
<keyword id="KW-0548">Nucleotidyltransferase</keyword>
<keyword id="KW-0804">Transcription</keyword>
<keyword id="KW-0808">Transferase</keyword>